<reference key="1">
    <citation type="submission" date="2005-09" db="EMBL/GenBank/DDBJ databases">
        <title>Complete genome sequence of Clostridium kluyveri and comparative genomics of Clostridia species.</title>
        <authorList>
            <person name="Inui M."/>
            <person name="Nonaka H."/>
            <person name="Shinoda Y."/>
            <person name="Ikenaga Y."/>
            <person name="Abe M."/>
            <person name="Naito K."/>
            <person name="Vertes A.A."/>
            <person name="Yukawa H."/>
        </authorList>
    </citation>
    <scope>NUCLEOTIDE SEQUENCE [LARGE SCALE GENOMIC DNA]</scope>
    <source>
        <strain>NBRC 12016</strain>
    </source>
</reference>
<dbReference type="EC" id="6.1.1.1" evidence="1"/>
<dbReference type="EMBL" id="AP009049">
    <property type="protein sequence ID" value="BAH05731.1"/>
    <property type="molecule type" value="Genomic_DNA"/>
</dbReference>
<dbReference type="RefSeq" id="WP_011989326.1">
    <property type="nucleotide sequence ID" value="NC_011837.1"/>
</dbReference>
<dbReference type="SMR" id="B9DZQ6"/>
<dbReference type="KEGG" id="ckr:CKR_0680"/>
<dbReference type="HOGENOM" id="CLU_024003_0_3_9"/>
<dbReference type="Proteomes" id="UP000007969">
    <property type="component" value="Chromosome"/>
</dbReference>
<dbReference type="GO" id="GO:0005829">
    <property type="term" value="C:cytosol"/>
    <property type="evidence" value="ECO:0007669"/>
    <property type="project" value="TreeGrafter"/>
</dbReference>
<dbReference type="GO" id="GO:0005524">
    <property type="term" value="F:ATP binding"/>
    <property type="evidence" value="ECO:0007669"/>
    <property type="project" value="UniProtKB-UniRule"/>
</dbReference>
<dbReference type="GO" id="GO:0003723">
    <property type="term" value="F:RNA binding"/>
    <property type="evidence" value="ECO:0007669"/>
    <property type="project" value="UniProtKB-KW"/>
</dbReference>
<dbReference type="GO" id="GO:0004831">
    <property type="term" value="F:tyrosine-tRNA ligase activity"/>
    <property type="evidence" value="ECO:0007669"/>
    <property type="project" value="UniProtKB-UniRule"/>
</dbReference>
<dbReference type="GO" id="GO:0006437">
    <property type="term" value="P:tyrosyl-tRNA aminoacylation"/>
    <property type="evidence" value="ECO:0007669"/>
    <property type="project" value="UniProtKB-UniRule"/>
</dbReference>
<dbReference type="CDD" id="cd00165">
    <property type="entry name" value="S4"/>
    <property type="match status" value="1"/>
</dbReference>
<dbReference type="CDD" id="cd00805">
    <property type="entry name" value="TyrRS_core"/>
    <property type="match status" value="1"/>
</dbReference>
<dbReference type="FunFam" id="1.10.240.10:FF:000001">
    <property type="entry name" value="Tyrosine--tRNA ligase"/>
    <property type="match status" value="1"/>
</dbReference>
<dbReference type="FunFam" id="3.10.290.10:FF:000022">
    <property type="entry name" value="Tyrosine--tRNA ligase"/>
    <property type="match status" value="1"/>
</dbReference>
<dbReference type="FunFam" id="3.40.50.620:FF:000008">
    <property type="entry name" value="Tyrosine--tRNA ligase"/>
    <property type="match status" value="1"/>
</dbReference>
<dbReference type="Gene3D" id="3.40.50.620">
    <property type="entry name" value="HUPs"/>
    <property type="match status" value="1"/>
</dbReference>
<dbReference type="Gene3D" id="3.10.290.10">
    <property type="entry name" value="RNA-binding S4 domain"/>
    <property type="match status" value="1"/>
</dbReference>
<dbReference type="Gene3D" id="1.10.240.10">
    <property type="entry name" value="Tyrosyl-Transfer RNA Synthetase"/>
    <property type="match status" value="1"/>
</dbReference>
<dbReference type="HAMAP" id="MF_02006">
    <property type="entry name" value="Tyr_tRNA_synth_type1"/>
    <property type="match status" value="1"/>
</dbReference>
<dbReference type="InterPro" id="IPR001412">
    <property type="entry name" value="aa-tRNA-synth_I_CS"/>
</dbReference>
<dbReference type="InterPro" id="IPR002305">
    <property type="entry name" value="aa-tRNA-synth_Ic"/>
</dbReference>
<dbReference type="InterPro" id="IPR014729">
    <property type="entry name" value="Rossmann-like_a/b/a_fold"/>
</dbReference>
<dbReference type="InterPro" id="IPR002942">
    <property type="entry name" value="S4_RNA-bd"/>
</dbReference>
<dbReference type="InterPro" id="IPR036986">
    <property type="entry name" value="S4_RNA-bd_sf"/>
</dbReference>
<dbReference type="InterPro" id="IPR054608">
    <property type="entry name" value="SYY-like_C"/>
</dbReference>
<dbReference type="InterPro" id="IPR002307">
    <property type="entry name" value="Tyr-tRNA-ligase"/>
</dbReference>
<dbReference type="InterPro" id="IPR024088">
    <property type="entry name" value="Tyr-tRNA-ligase_bac-type"/>
</dbReference>
<dbReference type="InterPro" id="IPR024107">
    <property type="entry name" value="Tyr-tRNA-ligase_bac_1"/>
</dbReference>
<dbReference type="NCBIfam" id="TIGR00234">
    <property type="entry name" value="tyrS"/>
    <property type="match status" value="1"/>
</dbReference>
<dbReference type="PANTHER" id="PTHR11766:SF0">
    <property type="entry name" value="TYROSINE--TRNA LIGASE, MITOCHONDRIAL"/>
    <property type="match status" value="1"/>
</dbReference>
<dbReference type="PANTHER" id="PTHR11766">
    <property type="entry name" value="TYROSYL-TRNA SYNTHETASE"/>
    <property type="match status" value="1"/>
</dbReference>
<dbReference type="Pfam" id="PF22421">
    <property type="entry name" value="SYY_C-terminal"/>
    <property type="match status" value="1"/>
</dbReference>
<dbReference type="Pfam" id="PF00579">
    <property type="entry name" value="tRNA-synt_1b"/>
    <property type="match status" value="1"/>
</dbReference>
<dbReference type="PRINTS" id="PR01040">
    <property type="entry name" value="TRNASYNTHTYR"/>
</dbReference>
<dbReference type="SMART" id="SM00363">
    <property type="entry name" value="S4"/>
    <property type="match status" value="1"/>
</dbReference>
<dbReference type="SUPFAM" id="SSF55174">
    <property type="entry name" value="Alpha-L RNA-binding motif"/>
    <property type="match status" value="1"/>
</dbReference>
<dbReference type="SUPFAM" id="SSF52374">
    <property type="entry name" value="Nucleotidylyl transferase"/>
    <property type="match status" value="1"/>
</dbReference>
<dbReference type="PROSITE" id="PS00178">
    <property type="entry name" value="AA_TRNA_LIGASE_I"/>
    <property type="match status" value="1"/>
</dbReference>
<dbReference type="PROSITE" id="PS50889">
    <property type="entry name" value="S4"/>
    <property type="match status" value="1"/>
</dbReference>
<evidence type="ECO:0000255" key="1">
    <source>
        <dbReference type="HAMAP-Rule" id="MF_02006"/>
    </source>
</evidence>
<gene>
    <name evidence="1" type="primary">tyrS</name>
    <name type="ordered locus">CKR_0680</name>
</gene>
<sequence>MANVYDILLERGYIKQITHEDEVRELLGKEKVTFYIGFDPTADSLHIGHFLQMMVMSHMQKAGHKPIALLGGGTAMIGDPTGKTDMRKMLSREQIQHNADCFKKQFSKFIDFEDEKAIMANNADWLMNLNYVNFLREIGVHFSVNKMLTAECFKQRMEKGLTFLEFNYMLMQGYDFLELNRRYGCTFQMGGDDQWANIIAGVNLIRKKERKPAFGMTFTLLTKSDGKKMGKTEGGAIWLDKEKTSPYDFYQYWRNVDDADVEKCLLLLTFLPMDEVKRLSSLPGEKINEAKKVLAYEVTKIIHGEKEAQMAKEAAEALFSGGESLNNVPTIELDESSLGCSVVELLVDIHILPSKSEARRLIKQNGLTINGEKVTDSELKVTKDHFKNGELLIRRGKKNYNRIIIK</sequence>
<organism>
    <name type="scientific">Clostridium kluyveri (strain NBRC 12016)</name>
    <dbReference type="NCBI Taxonomy" id="583346"/>
    <lineage>
        <taxon>Bacteria</taxon>
        <taxon>Bacillati</taxon>
        <taxon>Bacillota</taxon>
        <taxon>Clostridia</taxon>
        <taxon>Eubacteriales</taxon>
        <taxon>Clostridiaceae</taxon>
        <taxon>Clostridium</taxon>
    </lineage>
</organism>
<protein>
    <recommendedName>
        <fullName evidence="1">Tyrosine--tRNA ligase</fullName>
        <ecNumber evidence="1">6.1.1.1</ecNumber>
    </recommendedName>
    <alternativeName>
        <fullName evidence="1">Tyrosyl-tRNA synthetase</fullName>
        <shortName evidence="1">TyrRS</shortName>
    </alternativeName>
</protein>
<accession>B9DZQ6</accession>
<keyword id="KW-0030">Aminoacyl-tRNA synthetase</keyword>
<keyword id="KW-0067">ATP-binding</keyword>
<keyword id="KW-0963">Cytoplasm</keyword>
<keyword id="KW-0436">Ligase</keyword>
<keyword id="KW-0547">Nucleotide-binding</keyword>
<keyword id="KW-0648">Protein biosynthesis</keyword>
<keyword id="KW-0694">RNA-binding</keyword>
<comment type="function">
    <text evidence="1">Catalyzes the attachment of tyrosine to tRNA(Tyr) in a two-step reaction: tyrosine is first activated by ATP to form Tyr-AMP and then transferred to the acceptor end of tRNA(Tyr).</text>
</comment>
<comment type="catalytic activity">
    <reaction evidence="1">
        <text>tRNA(Tyr) + L-tyrosine + ATP = L-tyrosyl-tRNA(Tyr) + AMP + diphosphate + H(+)</text>
        <dbReference type="Rhea" id="RHEA:10220"/>
        <dbReference type="Rhea" id="RHEA-COMP:9706"/>
        <dbReference type="Rhea" id="RHEA-COMP:9707"/>
        <dbReference type="ChEBI" id="CHEBI:15378"/>
        <dbReference type="ChEBI" id="CHEBI:30616"/>
        <dbReference type="ChEBI" id="CHEBI:33019"/>
        <dbReference type="ChEBI" id="CHEBI:58315"/>
        <dbReference type="ChEBI" id="CHEBI:78442"/>
        <dbReference type="ChEBI" id="CHEBI:78536"/>
        <dbReference type="ChEBI" id="CHEBI:456215"/>
        <dbReference type="EC" id="6.1.1.1"/>
    </reaction>
</comment>
<comment type="subunit">
    <text evidence="1">Homodimer.</text>
</comment>
<comment type="subcellular location">
    <subcellularLocation>
        <location evidence="1">Cytoplasm</location>
    </subcellularLocation>
</comment>
<comment type="similarity">
    <text evidence="1">Belongs to the class-I aminoacyl-tRNA synthetase family. TyrS type 1 subfamily.</text>
</comment>
<feature type="chain" id="PRO_1000189280" description="Tyrosine--tRNA ligase">
    <location>
        <begin position="1"/>
        <end position="406"/>
    </location>
</feature>
<feature type="domain" description="S4 RNA-binding" evidence="1">
    <location>
        <begin position="340"/>
        <end position="406"/>
    </location>
</feature>
<feature type="short sequence motif" description="'HIGH' region">
    <location>
        <begin position="40"/>
        <end position="49"/>
    </location>
</feature>
<feature type="short sequence motif" description="'KMSKS' region">
    <location>
        <begin position="228"/>
        <end position="232"/>
    </location>
</feature>
<feature type="binding site" evidence="1">
    <location>
        <position position="35"/>
    </location>
    <ligand>
        <name>L-tyrosine</name>
        <dbReference type="ChEBI" id="CHEBI:58315"/>
    </ligand>
</feature>
<feature type="binding site" evidence="1">
    <location>
        <position position="168"/>
    </location>
    <ligand>
        <name>L-tyrosine</name>
        <dbReference type="ChEBI" id="CHEBI:58315"/>
    </ligand>
</feature>
<feature type="binding site" evidence="1">
    <location>
        <position position="172"/>
    </location>
    <ligand>
        <name>L-tyrosine</name>
        <dbReference type="ChEBI" id="CHEBI:58315"/>
    </ligand>
</feature>
<feature type="binding site" evidence="1">
    <location>
        <position position="231"/>
    </location>
    <ligand>
        <name>ATP</name>
        <dbReference type="ChEBI" id="CHEBI:30616"/>
    </ligand>
</feature>
<proteinExistence type="inferred from homology"/>
<name>SYY_CLOK1</name>